<keyword id="KW-0007">Acetylation</keyword>
<keyword id="KW-1003">Cell membrane</keyword>
<keyword id="KW-0961">Cell wall biogenesis/degradation</keyword>
<keyword id="KW-0472">Membrane</keyword>
<keyword id="KW-0812">Transmembrane</keyword>
<keyword id="KW-1133">Transmembrane helix</keyword>
<comment type="function">
    <text evidence="1">Regulates membrane-cell wall junctions and localized cell wall deposition. Required for establishment of the Casparian strip membrane domain (CSD) and the subsequent formation of Casparian strips, a cell wall modification of the root endodermis that determines an apoplastic barrier between the intraorganismal apoplasm and the extraorganismal apoplasm and prevents lateral diffusion (By similarity).</text>
</comment>
<comment type="subunit">
    <text evidence="1">Homodimer and heterodimers.</text>
</comment>
<comment type="subcellular location">
    <subcellularLocation>
        <location evidence="1">Cell membrane</location>
        <topology evidence="1">Multi-pass membrane protein</topology>
    </subcellularLocation>
    <text evidence="1">Very restricted localization following a belt shape within the plasma membrane which coincides with the position of the Casparian strip membrane domain in the root endodermis.</text>
</comment>
<comment type="similarity">
    <text evidence="4">Belongs to the Casparian strip membrane proteins (CASP) family.</text>
</comment>
<protein>
    <recommendedName>
        <fullName>Casparian strip membrane protein 1</fullName>
        <shortName>RrCASP1</shortName>
    </recommendedName>
</protein>
<evidence type="ECO:0000250" key="1"/>
<evidence type="ECO:0000250" key="2">
    <source>
        <dbReference type="UniProtKB" id="Q9SQU2"/>
    </source>
</evidence>
<evidence type="ECO:0000255" key="3"/>
<evidence type="ECO:0000305" key="4"/>
<dbReference type="EMBL" id="EX763487">
    <property type="status" value="NOT_ANNOTATED_CDS"/>
    <property type="molecule type" value="mRNA"/>
</dbReference>
<dbReference type="SMR" id="P0DI49"/>
<dbReference type="GO" id="GO:0005886">
    <property type="term" value="C:plasma membrane"/>
    <property type="evidence" value="ECO:0007669"/>
    <property type="project" value="UniProtKB-SubCell"/>
</dbReference>
<dbReference type="GO" id="GO:0071555">
    <property type="term" value="P:cell wall organization"/>
    <property type="evidence" value="ECO:0007669"/>
    <property type="project" value="UniProtKB-KW"/>
</dbReference>
<dbReference type="InterPro" id="IPR006459">
    <property type="entry name" value="CASP/CASPL"/>
</dbReference>
<dbReference type="InterPro" id="IPR006702">
    <property type="entry name" value="CASP_dom"/>
</dbReference>
<dbReference type="InterPro" id="IPR044173">
    <property type="entry name" value="CASPL"/>
</dbReference>
<dbReference type="NCBIfam" id="TIGR01569">
    <property type="entry name" value="A_tha_TIGR01569"/>
    <property type="match status" value="1"/>
</dbReference>
<dbReference type="PANTHER" id="PTHR36488:SF11">
    <property type="entry name" value="CASP-LIKE PROTEIN"/>
    <property type="match status" value="1"/>
</dbReference>
<dbReference type="PANTHER" id="PTHR36488">
    <property type="entry name" value="CASP-LIKE PROTEIN 1U1"/>
    <property type="match status" value="1"/>
</dbReference>
<dbReference type="Pfam" id="PF04535">
    <property type="entry name" value="CASP_dom"/>
    <property type="match status" value="1"/>
</dbReference>
<reference key="1">
    <citation type="submission" date="2007-11" db="EMBL/GenBank/DDBJ databases">
        <title>Comparative cDNA sequencing in radish (Raphanus), a crop, weed, and model system in ecology and evolution.</title>
        <authorList>
            <person name="Conner J.K."/>
            <person name="Shiu S.H."/>
            <person name="Xiao Y."/>
        </authorList>
    </citation>
    <scope>NUCLEOTIDE SEQUENCE [LARGE SCALE MRNA]</scope>
    <source>
        <tissue>Seedling</tissue>
    </source>
</reference>
<reference key="2">
    <citation type="journal article" date="2014" name="Plant Physiol.">
        <title>Functional and evolutionary analysis of the CASPARIAN STRIP MEMBRANE DOMAIN PROTEIN family.</title>
        <authorList>
            <person name="Roppolo D."/>
            <person name="Boeckmann B."/>
            <person name="Pfister A."/>
            <person name="Boutet E."/>
            <person name="Rubio M.C."/>
            <person name="Denervaud-Tendon V."/>
            <person name="Vermeer J.E."/>
            <person name="Gheyselinck J."/>
            <person name="Xenarios I."/>
            <person name="Geldner N."/>
        </authorList>
    </citation>
    <scope>GENE FAMILY</scope>
    <scope>NOMENCLATURE</scope>
</reference>
<sequence length="207" mass="22015">MAKESTTIDVGEPNTMTKSTSHVVVDEKKKKGFVAAAAGGGYKRGLAVFDFLLRLAAIGITIGASSVMFTAEETLPFFTQFLQFQAGYDDFPTFQFFVIAIAIVASYLVLSLPFSIVTIVRPLAVAPRLILLISDTVVLTLTTAAAAAAASIVYLAHNGNTNTNWLPICQQFGDFCQTASTAVVAASISVAFFVLLIVISAIALKRH</sequence>
<name>CASP1_RAPRA</name>
<organism>
    <name type="scientific">Raphanus raphanistrum</name>
    <name type="common">Wild radish</name>
    <dbReference type="NCBI Taxonomy" id="109996"/>
    <lineage>
        <taxon>Eukaryota</taxon>
        <taxon>Viridiplantae</taxon>
        <taxon>Streptophyta</taxon>
        <taxon>Embryophyta</taxon>
        <taxon>Tracheophyta</taxon>
        <taxon>Spermatophyta</taxon>
        <taxon>Magnoliopsida</taxon>
        <taxon>eudicotyledons</taxon>
        <taxon>Gunneridae</taxon>
        <taxon>Pentapetalae</taxon>
        <taxon>rosids</taxon>
        <taxon>malvids</taxon>
        <taxon>Brassicales</taxon>
        <taxon>Brassicaceae</taxon>
        <taxon>Brassiceae</taxon>
        <taxon>Raphanus</taxon>
    </lineage>
</organism>
<accession>P0DI49</accession>
<feature type="initiator methionine" description="Removed" evidence="2">
    <location>
        <position position="1"/>
    </location>
</feature>
<feature type="chain" id="PRO_0000417801" description="Casparian strip membrane protein 1">
    <location>
        <begin position="2"/>
        <end position="207"/>
    </location>
</feature>
<feature type="topological domain" description="Cytoplasmic" evidence="3">
    <location>
        <begin position="2"/>
        <end position="44"/>
    </location>
</feature>
<feature type="transmembrane region" description="Helical" evidence="3">
    <location>
        <begin position="45"/>
        <end position="65"/>
    </location>
</feature>
<feature type="topological domain" description="Extracellular" evidence="3">
    <location>
        <begin position="66"/>
        <end position="95"/>
    </location>
</feature>
<feature type="transmembrane region" description="Helical" evidence="3">
    <location>
        <begin position="96"/>
        <end position="116"/>
    </location>
</feature>
<feature type="topological domain" description="Cytoplasmic" evidence="3">
    <location>
        <begin position="117"/>
        <end position="128"/>
    </location>
</feature>
<feature type="transmembrane region" description="Helical" evidence="3">
    <location>
        <begin position="129"/>
        <end position="149"/>
    </location>
</feature>
<feature type="topological domain" description="Extracellular" evidence="3">
    <location>
        <begin position="150"/>
        <end position="181"/>
    </location>
</feature>
<feature type="transmembrane region" description="Helical" evidence="3">
    <location>
        <begin position="182"/>
        <end position="202"/>
    </location>
</feature>
<feature type="topological domain" description="Cytoplasmic" evidence="3">
    <location>
        <begin position="203"/>
        <end position="207"/>
    </location>
</feature>
<feature type="modified residue" description="N-acetylalanine" evidence="2">
    <location>
        <position position="2"/>
    </location>
</feature>
<proteinExistence type="evidence at transcript level"/>